<dbReference type="EC" id="6.2.1.5" evidence="1"/>
<dbReference type="EMBL" id="CP000316">
    <property type="protein sequence ID" value="ABE46565.1"/>
    <property type="molecule type" value="Genomic_DNA"/>
</dbReference>
<dbReference type="RefSeq" id="WP_011485552.1">
    <property type="nucleotide sequence ID" value="NC_007948.1"/>
</dbReference>
<dbReference type="SMR" id="Q122H7"/>
<dbReference type="STRING" id="296591.Bpro_4682"/>
<dbReference type="KEGG" id="pol:Bpro_4682"/>
<dbReference type="eggNOG" id="COG0045">
    <property type="taxonomic scope" value="Bacteria"/>
</dbReference>
<dbReference type="HOGENOM" id="CLU_037430_0_2_4"/>
<dbReference type="OrthoDB" id="9802602at2"/>
<dbReference type="UniPathway" id="UPA00223">
    <property type="reaction ID" value="UER00999"/>
</dbReference>
<dbReference type="Proteomes" id="UP000001983">
    <property type="component" value="Chromosome"/>
</dbReference>
<dbReference type="GO" id="GO:0005829">
    <property type="term" value="C:cytosol"/>
    <property type="evidence" value="ECO:0007669"/>
    <property type="project" value="TreeGrafter"/>
</dbReference>
<dbReference type="GO" id="GO:0042709">
    <property type="term" value="C:succinate-CoA ligase complex"/>
    <property type="evidence" value="ECO:0007669"/>
    <property type="project" value="TreeGrafter"/>
</dbReference>
<dbReference type="GO" id="GO:0005524">
    <property type="term" value="F:ATP binding"/>
    <property type="evidence" value="ECO:0007669"/>
    <property type="project" value="UniProtKB-UniRule"/>
</dbReference>
<dbReference type="GO" id="GO:0000287">
    <property type="term" value="F:magnesium ion binding"/>
    <property type="evidence" value="ECO:0007669"/>
    <property type="project" value="UniProtKB-UniRule"/>
</dbReference>
<dbReference type="GO" id="GO:0004775">
    <property type="term" value="F:succinate-CoA ligase (ADP-forming) activity"/>
    <property type="evidence" value="ECO:0007669"/>
    <property type="project" value="UniProtKB-UniRule"/>
</dbReference>
<dbReference type="GO" id="GO:0004776">
    <property type="term" value="F:succinate-CoA ligase (GDP-forming) activity"/>
    <property type="evidence" value="ECO:0007669"/>
    <property type="project" value="RHEA"/>
</dbReference>
<dbReference type="GO" id="GO:0006104">
    <property type="term" value="P:succinyl-CoA metabolic process"/>
    <property type="evidence" value="ECO:0007669"/>
    <property type="project" value="TreeGrafter"/>
</dbReference>
<dbReference type="GO" id="GO:0006099">
    <property type="term" value="P:tricarboxylic acid cycle"/>
    <property type="evidence" value="ECO:0007669"/>
    <property type="project" value="UniProtKB-UniRule"/>
</dbReference>
<dbReference type="FunFam" id="3.30.1490.20:FF:000002">
    <property type="entry name" value="Succinate--CoA ligase [ADP-forming] subunit beta"/>
    <property type="match status" value="1"/>
</dbReference>
<dbReference type="FunFam" id="3.30.470.20:FF:000002">
    <property type="entry name" value="Succinate--CoA ligase [ADP-forming] subunit beta"/>
    <property type="match status" value="1"/>
</dbReference>
<dbReference type="FunFam" id="3.40.50.261:FF:000001">
    <property type="entry name" value="Succinate--CoA ligase [ADP-forming] subunit beta"/>
    <property type="match status" value="1"/>
</dbReference>
<dbReference type="Gene3D" id="3.30.1490.20">
    <property type="entry name" value="ATP-grasp fold, A domain"/>
    <property type="match status" value="1"/>
</dbReference>
<dbReference type="Gene3D" id="3.30.470.20">
    <property type="entry name" value="ATP-grasp fold, B domain"/>
    <property type="match status" value="1"/>
</dbReference>
<dbReference type="Gene3D" id="3.40.50.261">
    <property type="entry name" value="Succinyl-CoA synthetase domains"/>
    <property type="match status" value="1"/>
</dbReference>
<dbReference type="HAMAP" id="MF_00558">
    <property type="entry name" value="Succ_CoA_beta"/>
    <property type="match status" value="1"/>
</dbReference>
<dbReference type="InterPro" id="IPR011761">
    <property type="entry name" value="ATP-grasp"/>
</dbReference>
<dbReference type="InterPro" id="IPR013650">
    <property type="entry name" value="ATP-grasp_succ-CoA_synth-type"/>
</dbReference>
<dbReference type="InterPro" id="IPR013815">
    <property type="entry name" value="ATP_grasp_subdomain_1"/>
</dbReference>
<dbReference type="InterPro" id="IPR017866">
    <property type="entry name" value="Succ-CoA_synthase_bsu_CS"/>
</dbReference>
<dbReference type="InterPro" id="IPR005811">
    <property type="entry name" value="SUCC_ACL_C"/>
</dbReference>
<dbReference type="InterPro" id="IPR005809">
    <property type="entry name" value="Succ_CoA_ligase-like_bsu"/>
</dbReference>
<dbReference type="InterPro" id="IPR016102">
    <property type="entry name" value="Succinyl-CoA_synth-like"/>
</dbReference>
<dbReference type="NCBIfam" id="NF001913">
    <property type="entry name" value="PRK00696.1"/>
    <property type="match status" value="1"/>
</dbReference>
<dbReference type="NCBIfam" id="TIGR01016">
    <property type="entry name" value="sucCoAbeta"/>
    <property type="match status" value="1"/>
</dbReference>
<dbReference type="PANTHER" id="PTHR11815:SF10">
    <property type="entry name" value="SUCCINATE--COA LIGASE [GDP-FORMING] SUBUNIT BETA, MITOCHONDRIAL"/>
    <property type="match status" value="1"/>
</dbReference>
<dbReference type="PANTHER" id="PTHR11815">
    <property type="entry name" value="SUCCINYL-COA SYNTHETASE BETA CHAIN"/>
    <property type="match status" value="1"/>
</dbReference>
<dbReference type="Pfam" id="PF08442">
    <property type="entry name" value="ATP-grasp_2"/>
    <property type="match status" value="1"/>
</dbReference>
<dbReference type="Pfam" id="PF00549">
    <property type="entry name" value="Ligase_CoA"/>
    <property type="match status" value="1"/>
</dbReference>
<dbReference type="PIRSF" id="PIRSF001554">
    <property type="entry name" value="SucCS_beta"/>
    <property type="match status" value="1"/>
</dbReference>
<dbReference type="SUPFAM" id="SSF56059">
    <property type="entry name" value="Glutathione synthetase ATP-binding domain-like"/>
    <property type="match status" value="1"/>
</dbReference>
<dbReference type="SUPFAM" id="SSF52210">
    <property type="entry name" value="Succinyl-CoA synthetase domains"/>
    <property type="match status" value="1"/>
</dbReference>
<dbReference type="PROSITE" id="PS50975">
    <property type="entry name" value="ATP_GRASP"/>
    <property type="match status" value="1"/>
</dbReference>
<dbReference type="PROSITE" id="PS01217">
    <property type="entry name" value="SUCCINYL_COA_LIG_3"/>
    <property type="match status" value="1"/>
</dbReference>
<name>SUCC_POLSJ</name>
<gene>
    <name evidence="1" type="primary">sucC</name>
    <name type="ordered locus">Bpro_4682</name>
</gene>
<protein>
    <recommendedName>
        <fullName evidence="1">Succinate--CoA ligase [ADP-forming] subunit beta</fullName>
        <ecNumber evidence="1">6.2.1.5</ecNumber>
    </recommendedName>
    <alternativeName>
        <fullName evidence="1">Succinyl-CoA synthetase subunit beta</fullName>
        <shortName evidence="1">SCS-beta</shortName>
    </alternativeName>
</protein>
<sequence length="386" mass="41208">MKIHEYQGKEILRNFGVPVPRGIPAFTVQEAVEAAQKLGGPVWVVKAQIHAGGRGKGGGVKVAKTIDDVKRIAGEILGMQLKTHQTGPEGQKVRRLYIEDGADIQKEYYVSAVTDRESQKVAFIASSEGGMDIEEVAHSNPEKIIKVFVDPLVGMTDAQAKEVAAGIGMPADSVAQTVDVLQKLYKCYMETDASLVEINPLNRNSKGEIMALDAKFNFDANALFRHPEIVAYRDLDEEDPAEVEASKFDLAYISLDGNIGCLVNGAGLAMATMDTIKLFGGEPANFLDVGGGATAEKVTEAFKIMLKNPEVKGILVNIFGGIMKCDTIADGVITACKAVNLSVPLVVRMKGTNEDLGKKMLADSGLPIIAADTMAEAATKIVAAVK</sequence>
<organism>
    <name type="scientific">Polaromonas sp. (strain JS666 / ATCC BAA-500)</name>
    <dbReference type="NCBI Taxonomy" id="296591"/>
    <lineage>
        <taxon>Bacteria</taxon>
        <taxon>Pseudomonadati</taxon>
        <taxon>Pseudomonadota</taxon>
        <taxon>Betaproteobacteria</taxon>
        <taxon>Burkholderiales</taxon>
        <taxon>Comamonadaceae</taxon>
        <taxon>Polaromonas</taxon>
    </lineage>
</organism>
<feature type="chain" id="PRO_1000082159" description="Succinate--CoA ligase [ADP-forming] subunit beta">
    <location>
        <begin position="1"/>
        <end position="386"/>
    </location>
</feature>
<feature type="domain" description="ATP-grasp" evidence="1">
    <location>
        <begin position="9"/>
        <end position="244"/>
    </location>
</feature>
<feature type="binding site" evidence="1">
    <location>
        <position position="46"/>
    </location>
    <ligand>
        <name>ATP</name>
        <dbReference type="ChEBI" id="CHEBI:30616"/>
    </ligand>
</feature>
<feature type="binding site" evidence="1">
    <location>
        <begin position="53"/>
        <end position="55"/>
    </location>
    <ligand>
        <name>ATP</name>
        <dbReference type="ChEBI" id="CHEBI:30616"/>
    </ligand>
</feature>
<feature type="binding site" evidence="1">
    <location>
        <position position="99"/>
    </location>
    <ligand>
        <name>ATP</name>
        <dbReference type="ChEBI" id="CHEBI:30616"/>
    </ligand>
</feature>
<feature type="binding site" evidence="1">
    <location>
        <position position="102"/>
    </location>
    <ligand>
        <name>ATP</name>
        <dbReference type="ChEBI" id="CHEBI:30616"/>
    </ligand>
</feature>
<feature type="binding site" evidence="1">
    <location>
        <position position="107"/>
    </location>
    <ligand>
        <name>ATP</name>
        <dbReference type="ChEBI" id="CHEBI:30616"/>
    </ligand>
</feature>
<feature type="binding site" evidence="1">
    <location>
        <position position="199"/>
    </location>
    <ligand>
        <name>Mg(2+)</name>
        <dbReference type="ChEBI" id="CHEBI:18420"/>
    </ligand>
</feature>
<feature type="binding site" evidence="1">
    <location>
        <position position="213"/>
    </location>
    <ligand>
        <name>Mg(2+)</name>
        <dbReference type="ChEBI" id="CHEBI:18420"/>
    </ligand>
</feature>
<feature type="binding site" evidence="1">
    <location>
        <position position="264"/>
    </location>
    <ligand>
        <name>substrate</name>
        <note>ligand shared with subunit alpha</note>
    </ligand>
</feature>
<feature type="binding site" evidence="1">
    <location>
        <begin position="321"/>
        <end position="323"/>
    </location>
    <ligand>
        <name>substrate</name>
        <note>ligand shared with subunit alpha</note>
    </ligand>
</feature>
<proteinExistence type="inferred from homology"/>
<reference key="1">
    <citation type="journal article" date="2008" name="Appl. Environ. Microbiol.">
        <title>The genome of Polaromonas sp. strain JS666: insights into the evolution of a hydrocarbon- and xenobiotic-degrading bacterium, and features of relevance to biotechnology.</title>
        <authorList>
            <person name="Mattes T.E."/>
            <person name="Alexander A.K."/>
            <person name="Richardson P.M."/>
            <person name="Munk A.C."/>
            <person name="Han C.S."/>
            <person name="Stothard P."/>
            <person name="Coleman N.V."/>
        </authorList>
    </citation>
    <scope>NUCLEOTIDE SEQUENCE [LARGE SCALE GENOMIC DNA]</scope>
    <source>
        <strain>JS666 / ATCC BAA-500</strain>
    </source>
</reference>
<accession>Q122H7</accession>
<evidence type="ECO:0000255" key="1">
    <source>
        <dbReference type="HAMAP-Rule" id="MF_00558"/>
    </source>
</evidence>
<comment type="function">
    <text evidence="1">Succinyl-CoA synthetase functions in the citric acid cycle (TCA), coupling the hydrolysis of succinyl-CoA to the synthesis of either ATP or GTP and thus represents the only step of substrate-level phosphorylation in the TCA. The beta subunit provides nucleotide specificity of the enzyme and binds the substrate succinate, while the binding sites for coenzyme A and phosphate are found in the alpha subunit.</text>
</comment>
<comment type="catalytic activity">
    <reaction evidence="1">
        <text>succinate + ATP + CoA = succinyl-CoA + ADP + phosphate</text>
        <dbReference type="Rhea" id="RHEA:17661"/>
        <dbReference type="ChEBI" id="CHEBI:30031"/>
        <dbReference type="ChEBI" id="CHEBI:30616"/>
        <dbReference type="ChEBI" id="CHEBI:43474"/>
        <dbReference type="ChEBI" id="CHEBI:57287"/>
        <dbReference type="ChEBI" id="CHEBI:57292"/>
        <dbReference type="ChEBI" id="CHEBI:456216"/>
        <dbReference type="EC" id="6.2.1.5"/>
    </reaction>
    <physiologicalReaction direction="right-to-left" evidence="1">
        <dbReference type="Rhea" id="RHEA:17663"/>
    </physiologicalReaction>
</comment>
<comment type="catalytic activity">
    <reaction evidence="1">
        <text>GTP + succinate + CoA = succinyl-CoA + GDP + phosphate</text>
        <dbReference type="Rhea" id="RHEA:22120"/>
        <dbReference type="ChEBI" id="CHEBI:30031"/>
        <dbReference type="ChEBI" id="CHEBI:37565"/>
        <dbReference type="ChEBI" id="CHEBI:43474"/>
        <dbReference type="ChEBI" id="CHEBI:57287"/>
        <dbReference type="ChEBI" id="CHEBI:57292"/>
        <dbReference type="ChEBI" id="CHEBI:58189"/>
    </reaction>
    <physiologicalReaction direction="right-to-left" evidence="1">
        <dbReference type="Rhea" id="RHEA:22122"/>
    </physiologicalReaction>
</comment>
<comment type="cofactor">
    <cofactor evidence="1">
        <name>Mg(2+)</name>
        <dbReference type="ChEBI" id="CHEBI:18420"/>
    </cofactor>
    <text evidence="1">Binds 1 Mg(2+) ion per subunit.</text>
</comment>
<comment type="pathway">
    <text evidence="1">Carbohydrate metabolism; tricarboxylic acid cycle; succinate from succinyl-CoA (ligase route): step 1/1.</text>
</comment>
<comment type="subunit">
    <text evidence="1">Heterotetramer of two alpha and two beta subunits.</text>
</comment>
<comment type="similarity">
    <text evidence="1">Belongs to the succinate/malate CoA ligase beta subunit family.</text>
</comment>
<keyword id="KW-0067">ATP-binding</keyword>
<keyword id="KW-0436">Ligase</keyword>
<keyword id="KW-0460">Magnesium</keyword>
<keyword id="KW-0479">Metal-binding</keyword>
<keyword id="KW-0547">Nucleotide-binding</keyword>
<keyword id="KW-1185">Reference proteome</keyword>
<keyword id="KW-0816">Tricarboxylic acid cycle</keyword>